<proteinExistence type="inferred from homology"/>
<gene>
    <name evidence="1" type="primary">psbF</name>
</gene>
<accession>Q6YLT4</accession>
<accession>B2Y1X5</accession>
<accession>B7ZI33</accession>
<name>PSBF_WELMI</name>
<keyword id="KW-0150">Chloroplast</keyword>
<keyword id="KW-0249">Electron transport</keyword>
<keyword id="KW-0349">Heme</keyword>
<keyword id="KW-0408">Iron</keyword>
<keyword id="KW-0472">Membrane</keyword>
<keyword id="KW-0479">Metal-binding</keyword>
<keyword id="KW-0602">Photosynthesis</keyword>
<keyword id="KW-0604">Photosystem II</keyword>
<keyword id="KW-0934">Plastid</keyword>
<keyword id="KW-0793">Thylakoid</keyword>
<keyword id="KW-0812">Transmembrane</keyword>
<keyword id="KW-1133">Transmembrane helix</keyword>
<keyword id="KW-0813">Transport</keyword>
<sequence>MTIEKIYPIFTVRWLAVHGLAVPTVFFLGSISAMQFIQR</sequence>
<reference key="1">
    <citation type="journal article" date="2003" name="Mol. Phylogenet. Evol.">
        <title>Inference of higher-order relationships in the cycads from a large chloroplast data set.</title>
        <authorList>
            <person name="Rai H.S."/>
            <person name="O'Brien H.E."/>
            <person name="Reeves P.A."/>
            <person name="Olmstead R.G."/>
            <person name="Graham S.W."/>
        </authorList>
    </citation>
    <scope>NUCLEOTIDE SEQUENCE [GENOMIC DNA]</scope>
</reference>
<reference key="2">
    <citation type="journal article" date="2008" name="BMC Evol. Biol.">
        <title>The complete plastid genome sequence of Welwitschia mirabilis: an unusually compact plastome with accelerated divergence rates.</title>
        <authorList>
            <person name="McCoy S.R."/>
            <person name="Kuehl J.V."/>
            <person name="Boore J.L."/>
            <person name="Raubeson L.A."/>
        </authorList>
    </citation>
    <scope>NUCLEOTIDE SEQUENCE [LARGE SCALE GENOMIC DNA]</scope>
</reference>
<reference key="3">
    <citation type="journal article" date="2009" name="Mol. Phylogenet. Evol.">
        <title>Evolution of reduced and compact chloroplast genomes (cpDNAs) in gnetophytes: Selection toward a lower-cost strategy.</title>
        <authorList>
            <person name="Wu C.-S."/>
            <person name="Lai Y.-T."/>
            <person name="Lin C.-P."/>
            <person name="Wang Y.-N."/>
            <person name="Chaw S.-M."/>
        </authorList>
    </citation>
    <scope>NUCLEOTIDE SEQUENCE [LARGE SCALE GENOMIC DNA]</scope>
</reference>
<feature type="chain" id="PRO_0000200463" description="Cytochrome b559 subunit beta">
    <location>
        <begin position="1"/>
        <end position="39"/>
    </location>
</feature>
<feature type="transmembrane region" description="Helical" evidence="1">
    <location>
        <begin position="14"/>
        <end position="30"/>
    </location>
</feature>
<feature type="binding site" description="axial binding residue" evidence="1">
    <location>
        <position position="18"/>
    </location>
    <ligand>
        <name>heme</name>
        <dbReference type="ChEBI" id="CHEBI:30413"/>
        <note>ligand shared with alpha subunit</note>
    </ligand>
    <ligandPart>
        <name>Fe</name>
        <dbReference type="ChEBI" id="CHEBI:18248"/>
    </ligandPart>
</feature>
<feature type="sequence conflict" description="In Ref. 3; BAH11213." evidence="2" ref="3">
    <original>V</original>
    <variation>A</variation>
    <location>
        <position position="17"/>
    </location>
</feature>
<comment type="function">
    <text evidence="1">This b-type cytochrome is tightly associated with the reaction center of photosystem II (PSII). PSII is a light-driven water:plastoquinone oxidoreductase that uses light energy to abstract electrons from H(2)O, generating O(2) and a proton gradient subsequently used for ATP formation. It consists of a core antenna complex that captures photons, and an electron transfer chain that converts photonic excitation into a charge separation.</text>
</comment>
<comment type="cofactor">
    <cofactor evidence="1">
        <name>heme b</name>
        <dbReference type="ChEBI" id="CHEBI:60344"/>
    </cofactor>
    <text evidence="1">With its partner (PsbE) binds heme. PSII binds additional chlorophylls, carotenoids and specific lipids.</text>
</comment>
<comment type="subunit">
    <text evidence="1">Heterodimer of an alpha subunit and a beta subunit. PSII is composed of 1 copy each of membrane proteins PsbA, PsbB, PsbC, PsbD, PsbE, PsbF, PsbH, PsbI, PsbJ, PsbK, PsbL, PsbM, PsbT, PsbX, PsbY, PsbZ, Psb30/Ycf12, at least 3 peripheral proteins of the oxygen-evolving complex and a large number of cofactors. It forms dimeric complexes.</text>
</comment>
<comment type="subcellular location">
    <subcellularLocation>
        <location evidence="1">Plastid</location>
        <location evidence="1">Chloroplast thylakoid membrane</location>
        <topology evidence="1">Single-pass membrane protein</topology>
    </subcellularLocation>
</comment>
<comment type="similarity">
    <text evidence="1">Belongs to the PsbE/PsbF family.</text>
</comment>
<dbReference type="EMBL" id="AY116660">
    <property type="protein sequence ID" value="AAN07079.1"/>
    <property type="molecule type" value="Genomic_DNA"/>
</dbReference>
<dbReference type="EMBL" id="EU342371">
    <property type="protein sequence ID" value="ABY26805.1"/>
    <property type="molecule type" value="Genomic_DNA"/>
</dbReference>
<dbReference type="EMBL" id="AP009568">
    <property type="protein sequence ID" value="BAH11213.1"/>
    <property type="molecule type" value="Genomic_DNA"/>
</dbReference>
<dbReference type="RefSeq" id="YP_001876592.1">
    <property type="nucleotide sequence ID" value="NC_010654.1"/>
</dbReference>
<dbReference type="SMR" id="Q6YLT4"/>
<dbReference type="GeneID" id="6276230"/>
<dbReference type="GO" id="GO:0009535">
    <property type="term" value="C:chloroplast thylakoid membrane"/>
    <property type="evidence" value="ECO:0007669"/>
    <property type="project" value="UniProtKB-SubCell"/>
</dbReference>
<dbReference type="GO" id="GO:0009539">
    <property type="term" value="C:photosystem II reaction center"/>
    <property type="evidence" value="ECO:0007669"/>
    <property type="project" value="InterPro"/>
</dbReference>
<dbReference type="GO" id="GO:0009055">
    <property type="term" value="F:electron transfer activity"/>
    <property type="evidence" value="ECO:0007669"/>
    <property type="project" value="UniProtKB-UniRule"/>
</dbReference>
<dbReference type="GO" id="GO:0020037">
    <property type="term" value="F:heme binding"/>
    <property type="evidence" value="ECO:0007669"/>
    <property type="project" value="InterPro"/>
</dbReference>
<dbReference type="GO" id="GO:0005506">
    <property type="term" value="F:iron ion binding"/>
    <property type="evidence" value="ECO:0007669"/>
    <property type="project" value="UniProtKB-UniRule"/>
</dbReference>
<dbReference type="GO" id="GO:0009767">
    <property type="term" value="P:photosynthetic electron transport chain"/>
    <property type="evidence" value="ECO:0007669"/>
    <property type="project" value="InterPro"/>
</dbReference>
<dbReference type="HAMAP" id="MF_00643">
    <property type="entry name" value="PSII_PsbF"/>
    <property type="match status" value="1"/>
</dbReference>
<dbReference type="InterPro" id="IPR006241">
    <property type="entry name" value="PSII_cyt_b559_bsu"/>
</dbReference>
<dbReference type="InterPro" id="IPR006216">
    <property type="entry name" value="PSII_cyt_b559_CS"/>
</dbReference>
<dbReference type="InterPro" id="IPR013081">
    <property type="entry name" value="PSII_cyt_b559_N"/>
</dbReference>
<dbReference type="NCBIfam" id="TIGR01333">
    <property type="entry name" value="cyt_b559_beta"/>
    <property type="match status" value="1"/>
</dbReference>
<dbReference type="Pfam" id="PF00283">
    <property type="entry name" value="Cytochrom_B559"/>
    <property type="match status" value="1"/>
</dbReference>
<dbReference type="PIRSF" id="PIRSF000037">
    <property type="entry name" value="PsbF"/>
    <property type="match status" value="1"/>
</dbReference>
<dbReference type="SUPFAM" id="SSF161045">
    <property type="entry name" value="Cytochrome b559 subunits"/>
    <property type="match status" value="1"/>
</dbReference>
<dbReference type="PROSITE" id="PS00537">
    <property type="entry name" value="CYTOCHROME_B559"/>
    <property type="match status" value="1"/>
</dbReference>
<evidence type="ECO:0000255" key="1">
    <source>
        <dbReference type="HAMAP-Rule" id="MF_00643"/>
    </source>
</evidence>
<evidence type="ECO:0000305" key="2"/>
<geneLocation type="chloroplast"/>
<protein>
    <recommendedName>
        <fullName evidence="1">Cytochrome b559 subunit beta</fullName>
    </recommendedName>
    <alternativeName>
        <fullName evidence="1">PSII reaction center subunit VI</fullName>
    </alternativeName>
</protein>
<organism>
    <name type="scientific">Welwitschia mirabilis</name>
    <name type="common">Tree tumbo</name>
    <name type="synonym">Welwitschia bainesii</name>
    <dbReference type="NCBI Taxonomy" id="3377"/>
    <lineage>
        <taxon>Eukaryota</taxon>
        <taxon>Viridiplantae</taxon>
        <taxon>Streptophyta</taxon>
        <taxon>Embryophyta</taxon>
        <taxon>Tracheophyta</taxon>
        <taxon>Spermatophyta</taxon>
        <taxon>Gnetopsida</taxon>
        <taxon>Gnetidae</taxon>
        <taxon>Welwitschiales</taxon>
        <taxon>Welwitschiaceae</taxon>
        <taxon>Welwitschia</taxon>
    </lineage>
</organism>